<proteinExistence type="inferred from homology"/>
<feature type="chain" id="PRO_1000118484" description="Methionyl-tRNA formyltransferase">
    <location>
        <begin position="1"/>
        <end position="312"/>
    </location>
</feature>
<feature type="binding site" evidence="1">
    <location>
        <begin position="111"/>
        <end position="114"/>
    </location>
    <ligand>
        <name>(6S)-5,6,7,8-tetrahydrofolate</name>
        <dbReference type="ChEBI" id="CHEBI:57453"/>
    </ligand>
</feature>
<keyword id="KW-0648">Protein biosynthesis</keyword>
<keyword id="KW-1185">Reference proteome</keyword>
<keyword id="KW-0808">Transferase</keyword>
<sequence length="312" mass="33075">MSRPRIVFMGTPEFAVSSLAACFELGDVVAVVTQPDKPKGRGNTVTAPPVKELALSRGVPVLQPTKLRTPPFAEELRQYAPDVCVVTAYGRILPKDLLELPTHGCVNVHGSLLPRFRGAAPIQWAIAHGDTETGVSLMVMDEGLDTGPVLAMKRMAIAPDETSASLYPKLAALGGEVLREFLPAYLSGELKPVPQPSEGMVLAPIIEKDQGRLDFTKPAVELERRLRAFTPWPGAFTTLGGKLLKVHRAQARGGSGAPGTVLASGPDGIEVACGEGSLVLLDLQPEGKRVMRAADFLQGHKLAPGSQPFVAG</sequence>
<name>FMT_MYXXD</name>
<gene>
    <name evidence="1" type="primary">fmt</name>
    <name type="ordered locus">MXAN_1399</name>
</gene>
<reference key="1">
    <citation type="journal article" date="2006" name="Proc. Natl. Acad. Sci. U.S.A.">
        <title>Evolution of sensory complexity recorded in a myxobacterial genome.</title>
        <authorList>
            <person name="Goldman B.S."/>
            <person name="Nierman W.C."/>
            <person name="Kaiser D."/>
            <person name="Slater S.C."/>
            <person name="Durkin A.S."/>
            <person name="Eisen J.A."/>
            <person name="Ronning C.M."/>
            <person name="Barbazuk W.B."/>
            <person name="Blanchard M."/>
            <person name="Field C."/>
            <person name="Halling C."/>
            <person name="Hinkle G."/>
            <person name="Iartchuk O."/>
            <person name="Kim H.S."/>
            <person name="Mackenzie C."/>
            <person name="Madupu R."/>
            <person name="Miller N."/>
            <person name="Shvartsbeyn A."/>
            <person name="Sullivan S.A."/>
            <person name="Vaudin M."/>
            <person name="Wiegand R."/>
            <person name="Kaplan H.B."/>
        </authorList>
    </citation>
    <scope>NUCLEOTIDE SEQUENCE [LARGE SCALE GENOMIC DNA]</scope>
    <source>
        <strain>DK1622</strain>
    </source>
</reference>
<organism>
    <name type="scientific">Myxococcus xanthus (strain DK1622)</name>
    <dbReference type="NCBI Taxonomy" id="246197"/>
    <lineage>
        <taxon>Bacteria</taxon>
        <taxon>Pseudomonadati</taxon>
        <taxon>Myxococcota</taxon>
        <taxon>Myxococcia</taxon>
        <taxon>Myxococcales</taxon>
        <taxon>Cystobacterineae</taxon>
        <taxon>Myxococcaceae</taxon>
        <taxon>Myxococcus</taxon>
    </lineage>
</organism>
<accession>Q1DCG7</accession>
<dbReference type="EC" id="2.1.2.9" evidence="1"/>
<dbReference type="EMBL" id="CP000113">
    <property type="protein sequence ID" value="ABF90944.1"/>
    <property type="molecule type" value="Genomic_DNA"/>
</dbReference>
<dbReference type="RefSeq" id="WP_011551516.1">
    <property type="nucleotide sequence ID" value="NC_008095.1"/>
</dbReference>
<dbReference type="SMR" id="Q1DCG7"/>
<dbReference type="STRING" id="246197.MXAN_1399"/>
<dbReference type="EnsemblBacteria" id="ABF90944">
    <property type="protein sequence ID" value="ABF90944"/>
    <property type="gene ID" value="MXAN_1399"/>
</dbReference>
<dbReference type="GeneID" id="41358846"/>
<dbReference type="KEGG" id="mxa:MXAN_1399"/>
<dbReference type="eggNOG" id="COG0223">
    <property type="taxonomic scope" value="Bacteria"/>
</dbReference>
<dbReference type="HOGENOM" id="CLU_033347_1_1_7"/>
<dbReference type="OrthoDB" id="9802815at2"/>
<dbReference type="Proteomes" id="UP000002402">
    <property type="component" value="Chromosome"/>
</dbReference>
<dbReference type="GO" id="GO:0005829">
    <property type="term" value="C:cytosol"/>
    <property type="evidence" value="ECO:0007669"/>
    <property type="project" value="TreeGrafter"/>
</dbReference>
<dbReference type="GO" id="GO:0004479">
    <property type="term" value="F:methionyl-tRNA formyltransferase activity"/>
    <property type="evidence" value="ECO:0007669"/>
    <property type="project" value="UniProtKB-UniRule"/>
</dbReference>
<dbReference type="CDD" id="cd08646">
    <property type="entry name" value="FMT_core_Met-tRNA-FMT_N"/>
    <property type="match status" value="1"/>
</dbReference>
<dbReference type="CDD" id="cd08704">
    <property type="entry name" value="Met_tRNA_FMT_C"/>
    <property type="match status" value="1"/>
</dbReference>
<dbReference type="FunFam" id="3.40.50.12230:FF:000001">
    <property type="entry name" value="Methionyl-tRNA formyltransferase"/>
    <property type="match status" value="1"/>
</dbReference>
<dbReference type="Gene3D" id="3.10.25.10">
    <property type="entry name" value="Formyl transferase, C-terminal domain"/>
    <property type="match status" value="1"/>
</dbReference>
<dbReference type="Gene3D" id="3.40.50.170">
    <property type="entry name" value="Formyl transferase, N-terminal domain"/>
    <property type="match status" value="1"/>
</dbReference>
<dbReference type="HAMAP" id="MF_00182">
    <property type="entry name" value="Formyl_trans"/>
    <property type="match status" value="1"/>
</dbReference>
<dbReference type="InterPro" id="IPR005794">
    <property type="entry name" value="Fmt"/>
</dbReference>
<dbReference type="InterPro" id="IPR005793">
    <property type="entry name" value="Formyl_trans_C"/>
</dbReference>
<dbReference type="InterPro" id="IPR037022">
    <property type="entry name" value="Formyl_trans_C_sf"/>
</dbReference>
<dbReference type="InterPro" id="IPR002376">
    <property type="entry name" value="Formyl_transf_N"/>
</dbReference>
<dbReference type="InterPro" id="IPR036477">
    <property type="entry name" value="Formyl_transf_N_sf"/>
</dbReference>
<dbReference type="InterPro" id="IPR011034">
    <property type="entry name" value="Formyl_transferase-like_C_sf"/>
</dbReference>
<dbReference type="InterPro" id="IPR001555">
    <property type="entry name" value="GART_AS"/>
</dbReference>
<dbReference type="InterPro" id="IPR044135">
    <property type="entry name" value="Met-tRNA-FMT_C"/>
</dbReference>
<dbReference type="InterPro" id="IPR041711">
    <property type="entry name" value="Met-tRNA-FMT_N"/>
</dbReference>
<dbReference type="NCBIfam" id="TIGR00460">
    <property type="entry name" value="fmt"/>
    <property type="match status" value="1"/>
</dbReference>
<dbReference type="PANTHER" id="PTHR11138">
    <property type="entry name" value="METHIONYL-TRNA FORMYLTRANSFERASE"/>
    <property type="match status" value="1"/>
</dbReference>
<dbReference type="PANTHER" id="PTHR11138:SF5">
    <property type="entry name" value="METHIONYL-TRNA FORMYLTRANSFERASE, MITOCHONDRIAL"/>
    <property type="match status" value="1"/>
</dbReference>
<dbReference type="Pfam" id="PF02911">
    <property type="entry name" value="Formyl_trans_C"/>
    <property type="match status" value="1"/>
</dbReference>
<dbReference type="Pfam" id="PF00551">
    <property type="entry name" value="Formyl_trans_N"/>
    <property type="match status" value="1"/>
</dbReference>
<dbReference type="SUPFAM" id="SSF50486">
    <property type="entry name" value="FMT C-terminal domain-like"/>
    <property type="match status" value="1"/>
</dbReference>
<dbReference type="SUPFAM" id="SSF53328">
    <property type="entry name" value="Formyltransferase"/>
    <property type="match status" value="1"/>
</dbReference>
<dbReference type="PROSITE" id="PS00373">
    <property type="entry name" value="GART"/>
    <property type="match status" value="1"/>
</dbReference>
<comment type="function">
    <text evidence="1">Attaches a formyl group to the free amino group of methionyl-tRNA(fMet). The formyl group appears to play a dual role in the initiator identity of N-formylmethionyl-tRNA by promoting its recognition by IF2 and preventing the misappropriation of this tRNA by the elongation apparatus.</text>
</comment>
<comment type="catalytic activity">
    <reaction evidence="1">
        <text>L-methionyl-tRNA(fMet) + (6R)-10-formyltetrahydrofolate = N-formyl-L-methionyl-tRNA(fMet) + (6S)-5,6,7,8-tetrahydrofolate + H(+)</text>
        <dbReference type="Rhea" id="RHEA:24380"/>
        <dbReference type="Rhea" id="RHEA-COMP:9952"/>
        <dbReference type="Rhea" id="RHEA-COMP:9953"/>
        <dbReference type="ChEBI" id="CHEBI:15378"/>
        <dbReference type="ChEBI" id="CHEBI:57453"/>
        <dbReference type="ChEBI" id="CHEBI:78530"/>
        <dbReference type="ChEBI" id="CHEBI:78844"/>
        <dbReference type="ChEBI" id="CHEBI:195366"/>
        <dbReference type="EC" id="2.1.2.9"/>
    </reaction>
</comment>
<comment type="similarity">
    <text evidence="1">Belongs to the Fmt family.</text>
</comment>
<evidence type="ECO:0000255" key="1">
    <source>
        <dbReference type="HAMAP-Rule" id="MF_00182"/>
    </source>
</evidence>
<protein>
    <recommendedName>
        <fullName evidence="1">Methionyl-tRNA formyltransferase</fullName>
        <ecNumber evidence="1">2.1.2.9</ecNumber>
    </recommendedName>
</protein>